<keyword id="KW-1015">Disulfide bond</keyword>
<keyword id="KW-0964">Secreted</keyword>
<keyword id="KW-0732">Signal</keyword>
<keyword id="KW-0800">Toxin</keyword>
<dbReference type="EMBL" id="AY591770">
    <property type="protein sequence ID" value="AAT01634.1"/>
    <property type="molecule type" value="mRNA"/>
</dbReference>
<dbReference type="ConoServer" id="861">
    <property type="toxin name" value="Lp5.2 precursor"/>
</dbReference>
<dbReference type="GO" id="GO:0005576">
    <property type="term" value="C:extracellular region"/>
    <property type="evidence" value="ECO:0007669"/>
    <property type="project" value="UniProtKB-SubCell"/>
</dbReference>
<dbReference type="GO" id="GO:0090729">
    <property type="term" value="F:toxin activity"/>
    <property type="evidence" value="ECO:0007669"/>
    <property type="project" value="UniProtKB-KW"/>
</dbReference>
<dbReference type="InterPro" id="IPR031565">
    <property type="entry name" value="T-conotoxin"/>
</dbReference>
<dbReference type="Pfam" id="PF16981">
    <property type="entry name" value="Chi-conotoxin"/>
    <property type="match status" value="1"/>
</dbReference>
<organism>
    <name type="scientific">Conus leopardus</name>
    <name type="common">Leopard cone</name>
    <dbReference type="NCBI Taxonomy" id="101306"/>
    <lineage>
        <taxon>Eukaryota</taxon>
        <taxon>Metazoa</taxon>
        <taxon>Spiralia</taxon>
        <taxon>Lophotrochozoa</taxon>
        <taxon>Mollusca</taxon>
        <taxon>Gastropoda</taxon>
        <taxon>Caenogastropoda</taxon>
        <taxon>Neogastropoda</taxon>
        <taxon>Conoidea</taxon>
        <taxon>Conidae</taxon>
        <taxon>Conus</taxon>
        <taxon>Lithoconus</taxon>
    </lineage>
</organism>
<sequence length="68" mass="7196">MRCVPVFIILLLLASPAAPKSLETRIQNDLIRAGLTDADLKTEKGFLSGLLNVAGSVCCKVDTSCCSN</sequence>
<name>CT52_CONLE</name>
<accession>Q6PN80</accession>
<evidence type="ECO:0000255" key="1"/>
<evidence type="ECO:0000303" key="2">
    <source>
    </source>
</evidence>
<evidence type="ECO:0000305" key="3"/>
<evidence type="ECO:0000305" key="4">
    <source>
    </source>
</evidence>
<protein>
    <recommendedName>
        <fullName evidence="2">Conotoxin Lp5.2</fullName>
    </recommendedName>
</protein>
<proteinExistence type="inferred from homology"/>
<reference key="1">
    <citation type="journal article" date="2006" name="Acta Biochim. Biophys. Sin.">
        <title>cDNA cloning of two novel T-superfamily conotoxins from Conus leopardus.</title>
        <authorList>
            <person name="Chen W.-H."/>
            <person name="Han Y.-H."/>
            <person name="Wang Q."/>
            <person name="Miao X.-W."/>
            <person name="Ou L."/>
            <person name="Shao X.-X."/>
        </authorList>
    </citation>
    <scope>NUCLEOTIDE SEQUENCE [MRNA]</scope>
    <source>
        <tissue>Venom duct</tissue>
    </source>
</reference>
<feature type="signal peptide" evidence="1">
    <location>
        <begin position="1"/>
        <end position="19"/>
    </location>
</feature>
<feature type="propeptide" id="PRO_0000234821" evidence="4">
    <location>
        <begin position="20"/>
        <end position="54"/>
    </location>
</feature>
<feature type="peptide" id="PRO_0000234822" description="Conotoxin Lp5.2" evidence="4">
    <location>
        <begin position="55"/>
        <end position="68"/>
    </location>
</feature>
<comment type="subcellular location">
    <subcellularLocation>
        <location evidence="4">Secreted</location>
    </subcellularLocation>
</comment>
<comment type="tissue specificity">
    <text evidence="4">Expressed by the venom duct.</text>
</comment>
<comment type="domain">
    <text evidence="3">The cysteine framework is V (CC-CC).</text>
</comment>
<comment type="PTM">
    <text evidence="3">Contains 2 disulfide bonds that can be either 'C1-C3, C2-C4' or 'C1-C4, C2-C3', since these disulfide connectivities have been observed for conotoxins with cysteine framework V (for examples, see AC P0DQQ7 and AC P81755).</text>
</comment>
<comment type="similarity">
    <text evidence="3">Belongs to the conotoxin T superfamily.</text>
</comment>